<comment type="function">
    <text evidence="2 3 4">The insulin-like growth factors, isolated from plasma, are structurally and functionally related to insulin but have a much higher growth-promoting activity. May be a physiological regulator of [1-14C]-2-deoxy-D-glucose (2DG) transport and glycogen synthesis in osteoblasts. Stimulates glucose transport in bone-derived osteoblastic (PyMS) cells and is effective at much lower concentrations than insulin, not only regarding glycogen and DNA synthesis but also with regard to enhancing glucose uptake. May play a role in synapse maturation. Ca(2+)-dependent exocytosis of IGF1 is required for sensory perception of smell in the olfactory bulb. Acts as a ligand for IGF1R. Binds to the alpha subunit of IGF1R, leading to the activation of the intrinsic tyrosine kinase activity which autophosphorylates tyrosine residues in the beta subunit thus initiating a cascade of down-stream signaling events leading to activation of the PI3K-AKT/PKB and the Ras-MAPK pathways. Binds to integrins ITGAV:ITGB3 and ITGA6:ITGB4. Its binding to integrins and subsequent ternary complex formation with integrins and IGFR1 are essential for IGF1 signaling. Induces the phosphorylation and activation of IGFR1, MAPK3/ERK1, MAPK1/ERK2 and AKT1 (By similarity). As part of the MAPK/ERK signaling pathway, acts as a negative regulator of apoptosis in cardiomyocytes via promotion of STUB1/CHIP-mediated ubiquitination and degradation of ICER-type isoforms of CREM (By similarity).</text>
</comment>
<comment type="subunit">
    <text evidence="3">Forms a ternary complex with IGFR1 and ITGAV:ITGB3. Forms a ternary complex with IGFR1 and ITGA6:ITGB4.</text>
</comment>
<comment type="subcellular location">
    <subcellularLocation>
        <location evidence="2">Secreted</location>
    </subcellularLocation>
</comment>
<comment type="similarity">
    <text evidence="6">Belongs to the insulin family.</text>
</comment>
<evidence type="ECO:0000250" key="1"/>
<evidence type="ECO:0000250" key="2">
    <source>
        <dbReference type="UniProtKB" id="P05017"/>
    </source>
</evidence>
<evidence type="ECO:0000250" key="3">
    <source>
        <dbReference type="UniProtKB" id="P05019"/>
    </source>
</evidence>
<evidence type="ECO:0000250" key="4">
    <source>
        <dbReference type="UniProtKB" id="P08025"/>
    </source>
</evidence>
<evidence type="ECO:0000303" key="5">
    <source ref="1"/>
</evidence>
<evidence type="ECO:0000305" key="6"/>
<gene>
    <name evidence="3" type="primary">IGF1</name>
    <name evidence="3" type="synonym">IGF-1</name>
</gene>
<organism>
    <name type="scientific">Suncus murinus</name>
    <name type="common">Asian house shrew</name>
    <name type="synonym">Musk shrew</name>
    <dbReference type="NCBI Taxonomy" id="9378"/>
    <lineage>
        <taxon>Eukaryota</taxon>
        <taxon>Metazoa</taxon>
        <taxon>Chordata</taxon>
        <taxon>Craniata</taxon>
        <taxon>Vertebrata</taxon>
        <taxon>Euteleostomi</taxon>
        <taxon>Mammalia</taxon>
        <taxon>Eutheria</taxon>
        <taxon>Laurasiatheria</taxon>
        <taxon>Eulipotyphla</taxon>
        <taxon>Soricidae</taxon>
        <taxon>Crocidurinae</taxon>
        <taxon>Suncus</taxon>
    </lineage>
</organism>
<name>IGF1_SUNMU</name>
<proteinExistence type="evidence at transcript level"/>
<feature type="propeptide" id="PRO_0000015687" evidence="1">
    <location>
        <begin position="1" status="less than"/>
        <end position="4"/>
    </location>
</feature>
<feature type="chain" id="PRO_0000015688" description="Insulin-like growth factor 1">
    <location>
        <begin position="5"/>
        <end position="74"/>
    </location>
</feature>
<feature type="propeptide" id="PRO_0000015689" description="E peptide">
    <location>
        <begin position="75"/>
        <end position="81" status="greater than"/>
    </location>
</feature>
<feature type="region of interest" description="B">
    <location>
        <begin position="5"/>
        <end position="33"/>
    </location>
</feature>
<feature type="region of interest" description="C">
    <location>
        <begin position="34"/>
        <end position="45"/>
    </location>
</feature>
<feature type="region of interest" description="A">
    <location>
        <begin position="46"/>
        <end position="66"/>
    </location>
</feature>
<feature type="region of interest" description="D">
    <location>
        <begin position="67"/>
        <end position="74"/>
    </location>
</feature>
<feature type="disulfide bond" evidence="1">
    <location>
        <begin position="10"/>
        <end position="52"/>
    </location>
</feature>
<feature type="disulfide bond" evidence="1">
    <location>
        <begin position="22"/>
        <end position="65"/>
    </location>
</feature>
<feature type="disulfide bond" evidence="1">
    <location>
        <begin position="51"/>
        <end position="56"/>
    </location>
</feature>
<feature type="non-terminal residue">
    <location>
        <position position="1"/>
    </location>
</feature>
<feature type="non-terminal residue">
    <location>
        <position position="81"/>
    </location>
</feature>
<dbReference type="EMBL" id="D43957">
    <property type="protein sequence ID" value="BAA07897.1"/>
    <property type="molecule type" value="mRNA"/>
</dbReference>
<dbReference type="BMRB" id="Q28933"/>
<dbReference type="SMR" id="Q28933"/>
<dbReference type="GO" id="GO:0035867">
    <property type="term" value="C:alphav-beta3 integrin-IGF-1-IGF1R complex"/>
    <property type="evidence" value="ECO:0000250"/>
    <property type="project" value="UniProtKB"/>
</dbReference>
<dbReference type="GO" id="GO:0070382">
    <property type="term" value="C:exocytic vesicle"/>
    <property type="evidence" value="ECO:0000250"/>
    <property type="project" value="UniProtKB"/>
</dbReference>
<dbReference type="GO" id="GO:0005615">
    <property type="term" value="C:extracellular space"/>
    <property type="evidence" value="ECO:0007669"/>
    <property type="project" value="InterPro"/>
</dbReference>
<dbReference type="GO" id="GO:0008083">
    <property type="term" value="F:growth factor activity"/>
    <property type="evidence" value="ECO:0007669"/>
    <property type="project" value="UniProtKB-KW"/>
</dbReference>
<dbReference type="GO" id="GO:0005179">
    <property type="term" value="F:hormone activity"/>
    <property type="evidence" value="ECO:0007669"/>
    <property type="project" value="InterPro"/>
</dbReference>
<dbReference type="GO" id="GO:0005159">
    <property type="term" value="F:insulin-like growth factor receptor binding"/>
    <property type="evidence" value="ECO:0000250"/>
    <property type="project" value="UniProtKB"/>
</dbReference>
<dbReference type="GO" id="GO:0008283">
    <property type="term" value="P:cell population proliferation"/>
    <property type="evidence" value="ECO:0007669"/>
    <property type="project" value="TreeGrafter"/>
</dbReference>
<dbReference type="GO" id="GO:0048009">
    <property type="term" value="P:insulin-like growth factor receptor signaling pathway"/>
    <property type="evidence" value="ECO:0000250"/>
    <property type="project" value="UniProtKB"/>
</dbReference>
<dbReference type="GO" id="GO:0043066">
    <property type="term" value="P:negative regulation of apoptotic process"/>
    <property type="evidence" value="ECO:0000250"/>
    <property type="project" value="UniProtKB"/>
</dbReference>
<dbReference type="GO" id="GO:0090201">
    <property type="term" value="P:negative regulation of release of cytochrome c from mitochondria"/>
    <property type="evidence" value="ECO:0000250"/>
    <property type="project" value="UniProtKB"/>
</dbReference>
<dbReference type="GO" id="GO:0034392">
    <property type="term" value="P:negative regulation of smooth muscle cell apoptotic process"/>
    <property type="evidence" value="ECO:0000250"/>
    <property type="project" value="UniProtKB"/>
</dbReference>
<dbReference type="GO" id="GO:0008284">
    <property type="term" value="P:positive regulation of cell population proliferation"/>
    <property type="evidence" value="ECO:0000250"/>
    <property type="project" value="UniProtKB"/>
</dbReference>
<dbReference type="GO" id="GO:0046326">
    <property type="term" value="P:positive regulation of D-glucose import"/>
    <property type="evidence" value="ECO:0000250"/>
    <property type="project" value="UniProtKB"/>
</dbReference>
<dbReference type="GO" id="GO:0045725">
    <property type="term" value="P:positive regulation of glycogen biosynthetic process"/>
    <property type="evidence" value="ECO:0000250"/>
    <property type="project" value="UniProtKB"/>
</dbReference>
<dbReference type="GO" id="GO:0043410">
    <property type="term" value="P:positive regulation of MAPK cascade"/>
    <property type="evidence" value="ECO:0000250"/>
    <property type="project" value="UniProtKB"/>
</dbReference>
<dbReference type="GO" id="GO:0051897">
    <property type="term" value="P:positive regulation of phosphatidylinositol 3-kinase/protein kinase B signal transduction"/>
    <property type="evidence" value="ECO:0007669"/>
    <property type="project" value="TreeGrafter"/>
</dbReference>
<dbReference type="CDD" id="cd04368">
    <property type="entry name" value="IlGF"/>
    <property type="match status" value="1"/>
</dbReference>
<dbReference type="FunFam" id="1.10.100.10:FF:000001">
    <property type="entry name" value="insulin-like growth factor I isoform X1"/>
    <property type="match status" value="1"/>
</dbReference>
<dbReference type="Gene3D" id="1.10.100.10">
    <property type="entry name" value="Insulin-like"/>
    <property type="match status" value="1"/>
</dbReference>
<dbReference type="InterPro" id="IPR022341">
    <property type="entry name" value="IGF-I"/>
</dbReference>
<dbReference type="InterPro" id="IPR016179">
    <property type="entry name" value="Insulin-like"/>
</dbReference>
<dbReference type="InterPro" id="IPR022350">
    <property type="entry name" value="Insulin-like_growth_factor"/>
</dbReference>
<dbReference type="InterPro" id="IPR036438">
    <property type="entry name" value="Insulin-like_sf"/>
</dbReference>
<dbReference type="InterPro" id="IPR022353">
    <property type="entry name" value="Insulin_CS"/>
</dbReference>
<dbReference type="InterPro" id="IPR022352">
    <property type="entry name" value="Insulin_family"/>
</dbReference>
<dbReference type="PANTHER" id="PTHR46845">
    <property type="entry name" value="INSULIN-LIKE GROWTH FACTOR I"/>
    <property type="match status" value="1"/>
</dbReference>
<dbReference type="PANTHER" id="PTHR46845:SF1">
    <property type="entry name" value="INSULIN-LIKE GROWTH FACTOR I"/>
    <property type="match status" value="1"/>
</dbReference>
<dbReference type="Pfam" id="PF00049">
    <property type="entry name" value="Insulin"/>
    <property type="match status" value="1"/>
</dbReference>
<dbReference type="PRINTS" id="PR02002">
    <property type="entry name" value="INSLNLIKEGF"/>
</dbReference>
<dbReference type="PRINTS" id="PR02005">
    <property type="entry name" value="INSLNLIKEGF1"/>
</dbReference>
<dbReference type="PRINTS" id="PR00276">
    <property type="entry name" value="INSULINFAMLY"/>
</dbReference>
<dbReference type="SMART" id="SM00078">
    <property type="entry name" value="IlGF"/>
    <property type="match status" value="1"/>
</dbReference>
<dbReference type="SUPFAM" id="SSF56994">
    <property type="entry name" value="Insulin-like"/>
    <property type="match status" value="1"/>
</dbReference>
<dbReference type="PROSITE" id="PS00262">
    <property type="entry name" value="INSULIN"/>
    <property type="match status" value="1"/>
</dbReference>
<keyword id="KW-1015">Disulfide bond</keyword>
<keyword id="KW-0339">Growth factor</keyword>
<keyword id="KW-0964">Secreted</keyword>
<sequence length="81" mass="8869">FASAGPETLCGAELVDALQFVCGDRGFYFNKPTGYGSSSRRAPQTGIVDECCFRSCDLRRLEMYCAPLKPAKAARSVRAQR</sequence>
<protein>
    <recommendedName>
        <fullName evidence="3">Insulin-like growth factor 1</fullName>
    </recommendedName>
    <alternativeName>
        <fullName evidence="5">Insulin-like growth factor I</fullName>
        <shortName evidence="5">IGF-I</shortName>
    </alternativeName>
    <alternativeName>
        <fullName>Somatomedin</fullName>
    </alternativeName>
</protein>
<reference key="1">
    <citation type="submission" date="1994-12" db="EMBL/GenBank/DDBJ databases">
        <title>Partial sequence of a IGF-I cDNA in the musk shrew, Suncus murinus.</title>
        <authorList>
            <person name="Ishikawa A."/>
        </authorList>
    </citation>
    <scope>NUCLEOTIDE SEQUENCE [MRNA]</scope>
    <source>
        <strain>BAN</strain>
        <strain>NAG</strain>
        <tissue>Liver</tissue>
    </source>
</reference>
<accession>Q28933</accession>